<proteinExistence type="inferred from homology"/>
<feature type="chain" id="PRO_1000216026" description="Small ribosomal subunit biogenesis GTPase RsgA">
    <location>
        <begin position="1"/>
        <end position="343"/>
    </location>
</feature>
<feature type="domain" description="CP-type G" evidence="2">
    <location>
        <begin position="116"/>
        <end position="275"/>
    </location>
</feature>
<feature type="binding site" evidence="1">
    <location>
        <begin position="163"/>
        <end position="166"/>
    </location>
    <ligand>
        <name>GTP</name>
        <dbReference type="ChEBI" id="CHEBI:37565"/>
    </ligand>
</feature>
<feature type="binding site" evidence="1">
    <location>
        <begin position="217"/>
        <end position="225"/>
    </location>
    <ligand>
        <name>GTP</name>
        <dbReference type="ChEBI" id="CHEBI:37565"/>
    </ligand>
</feature>
<feature type="binding site" evidence="1">
    <location>
        <position position="299"/>
    </location>
    <ligand>
        <name>Zn(2+)</name>
        <dbReference type="ChEBI" id="CHEBI:29105"/>
    </ligand>
</feature>
<feature type="binding site" evidence="1">
    <location>
        <position position="304"/>
    </location>
    <ligand>
        <name>Zn(2+)</name>
        <dbReference type="ChEBI" id="CHEBI:29105"/>
    </ligand>
</feature>
<feature type="binding site" evidence="1">
    <location>
        <position position="306"/>
    </location>
    <ligand>
        <name>Zn(2+)</name>
        <dbReference type="ChEBI" id="CHEBI:29105"/>
    </ligand>
</feature>
<feature type="binding site" evidence="1">
    <location>
        <position position="312"/>
    </location>
    <ligand>
        <name>Zn(2+)</name>
        <dbReference type="ChEBI" id="CHEBI:29105"/>
    </ligand>
</feature>
<protein>
    <recommendedName>
        <fullName evidence="1">Small ribosomal subunit biogenesis GTPase RsgA</fullName>
        <ecNumber evidence="1">3.6.1.-</ecNumber>
    </recommendedName>
</protein>
<sequence>MAKRQLTRRQSWRIEKIQEERAARAAKRESRAVEELEGGDLGPEQNGLVIAHFGVQVEVEAEDGELAGQVCRCHLRANLPALVTGDRVVWRAGNQGGGVIVAQLPRRSELCRPDMRGQLKPVAANVDRIVIVFAPLPEPHANLIDRYLVAAEHAGIRPLLLLNKADLVNEENAAGLDALLATYQRLGYPLLEVSARQGAGMQELQAALDGHVSVFVGQSGVGKSSLVNSLLPGVDTRVGALSEQTGKGMHTTTTARLFHFPGGGELIDSPGIREFSLGHVRRADVEAGFIEFRDLLGHCRFRDCRHDREPGCALLKALDEGRIQPQRMASYRHILASLPEPEY</sequence>
<organism>
    <name type="scientific">Azotobacter vinelandii (strain DJ / ATCC BAA-1303)</name>
    <dbReference type="NCBI Taxonomy" id="322710"/>
    <lineage>
        <taxon>Bacteria</taxon>
        <taxon>Pseudomonadati</taxon>
        <taxon>Pseudomonadota</taxon>
        <taxon>Gammaproteobacteria</taxon>
        <taxon>Pseudomonadales</taxon>
        <taxon>Pseudomonadaceae</taxon>
        <taxon>Azotobacter</taxon>
    </lineage>
</organism>
<comment type="function">
    <text evidence="1">One of several proteins that assist in the late maturation steps of the functional core of the 30S ribosomal subunit. Helps release RbfA from mature subunits. May play a role in the assembly of ribosomal proteins into the subunit. Circularly permuted GTPase that catalyzes slow GTP hydrolysis, GTPase activity is stimulated by the 30S ribosomal subunit.</text>
</comment>
<comment type="cofactor">
    <cofactor evidence="1">
        <name>Zn(2+)</name>
        <dbReference type="ChEBI" id="CHEBI:29105"/>
    </cofactor>
    <text evidence="1">Binds 1 zinc ion per subunit.</text>
</comment>
<comment type="subunit">
    <text evidence="1">Monomer. Associates with 30S ribosomal subunit, binds 16S rRNA.</text>
</comment>
<comment type="subcellular location">
    <subcellularLocation>
        <location evidence="1">Cytoplasm</location>
    </subcellularLocation>
</comment>
<comment type="similarity">
    <text evidence="1">Belongs to the TRAFAC class YlqF/YawG GTPase family. RsgA subfamily.</text>
</comment>
<dbReference type="EC" id="3.6.1.-" evidence="1"/>
<dbReference type="EMBL" id="CP001157">
    <property type="protein sequence ID" value="ACO76992.1"/>
    <property type="molecule type" value="Genomic_DNA"/>
</dbReference>
<dbReference type="RefSeq" id="WP_012699417.1">
    <property type="nucleotide sequence ID" value="NC_012560.1"/>
</dbReference>
<dbReference type="SMR" id="C1DLP4"/>
<dbReference type="STRING" id="322710.Avin_07460"/>
<dbReference type="EnsemblBacteria" id="ACO76992">
    <property type="protein sequence ID" value="ACO76992"/>
    <property type="gene ID" value="Avin_07460"/>
</dbReference>
<dbReference type="GeneID" id="88184142"/>
<dbReference type="KEGG" id="avn:Avin_07460"/>
<dbReference type="eggNOG" id="COG1162">
    <property type="taxonomic scope" value="Bacteria"/>
</dbReference>
<dbReference type="HOGENOM" id="CLU_033617_2_0_6"/>
<dbReference type="OrthoDB" id="9809485at2"/>
<dbReference type="Proteomes" id="UP000002424">
    <property type="component" value="Chromosome"/>
</dbReference>
<dbReference type="GO" id="GO:0005737">
    <property type="term" value="C:cytoplasm"/>
    <property type="evidence" value="ECO:0007669"/>
    <property type="project" value="UniProtKB-SubCell"/>
</dbReference>
<dbReference type="GO" id="GO:0005525">
    <property type="term" value="F:GTP binding"/>
    <property type="evidence" value="ECO:0007669"/>
    <property type="project" value="UniProtKB-UniRule"/>
</dbReference>
<dbReference type="GO" id="GO:0003924">
    <property type="term" value="F:GTPase activity"/>
    <property type="evidence" value="ECO:0007669"/>
    <property type="project" value="UniProtKB-UniRule"/>
</dbReference>
<dbReference type="GO" id="GO:0046872">
    <property type="term" value="F:metal ion binding"/>
    <property type="evidence" value="ECO:0007669"/>
    <property type="project" value="UniProtKB-KW"/>
</dbReference>
<dbReference type="GO" id="GO:0019843">
    <property type="term" value="F:rRNA binding"/>
    <property type="evidence" value="ECO:0007669"/>
    <property type="project" value="UniProtKB-KW"/>
</dbReference>
<dbReference type="GO" id="GO:0042274">
    <property type="term" value="P:ribosomal small subunit biogenesis"/>
    <property type="evidence" value="ECO:0007669"/>
    <property type="project" value="UniProtKB-UniRule"/>
</dbReference>
<dbReference type="CDD" id="cd01854">
    <property type="entry name" value="YjeQ_EngC"/>
    <property type="match status" value="1"/>
</dbReference>
<dbReference type="Gene3D" id="2.40.50.140">
    <property type="entry name" value="Nucleic acid-binding proteins"/>
    <property type="match status" value="1"/>
</dbReference>
<dbReference type="Gene3D" id="3.40.50.300">
    <property type="entry name" value="P-loop containing nucleotide triphosphate hydrolases"/>
    <property type="match status" value="1"/>
</dbReference>
<dbReference type="Gene3D" id="1.10.40.50">
    <property type="entry name" value="Probable gtpase engc, domain 3"/>
    <property type="match status" value="1"/>
</dbReference>
<dbReference type="HAMAP" id="MF_01820">
    <property type="entry name" value="GTPase_RsgA"/>
    <property type="match status" value="1"/>
</dbReference>
<dbReference type="InterPro" id="IPR030378">
    <property type="entry name" value="G_CP_dom"/>
</dbReference>
<dbReference type="InterPro" id="IPR012340">
    <property type="entry name" value="NA-bd_OB-fold"/>
</dbReference>
<dbReference type="InterPro" id="IPR027417">
    <property type="entry name" value="P-loop_NTPase"/>
</dbReference>
<dbReference type="InterPro" id="IPR004881">
    <property type="entry name" value="Ribosome_biogen_GTPase_RsgA"/>
</dbReference>
<dbReference type="InterPro" id="IPR010914">
    <property type="entry name" value="RsgA_GTPase_dom"/>
</dbReference>
<dbReference type="NCBIfam" id="NF008931">
    <property type="entry name" value="PRK12288.1"/>
    <property type="match status" value="1"/>
</dbReference>
<dbReference type="NCBIfam" id="TIGR00157">
    <property type="entry name" value="ribosome small subunit-dependent GTPase A"/>
    <property type="match status" value="1"/>
</dbReference>
<dbReference type="PANTHER" id="PTHR32120">
    <property type="entry name" value="SMALL RIBOSOMAL SUBUNIT BIOGENESIS GTPASE RSGA"/>
    <property type="match status" value="1"/>
</dbReference>
<dbReference type="PANTHER" id="PTHR32120:SF11">
    <property type="entry name" value="SMALL RIBOSOMAL SUBUNIT BIOGENESIS GTPASE RSGA 1, MITOCHONDRIAL-RELATED"/>
    <property type="match status" value="1"/>
</dbReference>
<dbReference type="Pfam" id="PF03193">
    <property type="entry name" value="RsgA_GTPase"/>
    <property type="match status" value="1"/>
</dbReference>
<dbReference type="SUPFAM" id="SSF52540">
    <property type="entry name" value="P-loop containing nucleoside triphosphate hydrolases"/>
    <property type="match status" value="1"/>
</dbReference>
<dbReference type="PROSITE" id="PS50936">
    <property type="entry name" value="ENGC_GTPASE"/>
    <property type="match status" value="1"/>
</dbReference>
<dbReference type="PROSITE" id="PS51721">
    <property type="entry name" value="G_CP"/>
    <property type="match status" value="1"/>
</dbReference>
<name>RSGA_AZOVD</name>
<reference key="1">
    <citation type="journal article" date="2009" name="J. Bacteriol.">
        <title>Genome sequence of Azotobacter vinelandii, an obligate aerobe specialized to support diverse anaerobic metabolic processes.</title>
        <authorList>
            <person name="Setubal J.C."/>
            <person name="Dos Santos P."/>
            <person name="Goldman B.S."/>
            <person name="Ertesvaag H."/>
            <person name="Espin G."/>
            <person name="Rubio L.M."/>
            <person name="Valla S."/>
            <person name="Almeida N.F."/>
            <person name="Balasubramanian D."/>
            <person name="Cromes L."/>
            <person name="Curatti L."/>
            <person name="Du Z."/>
            <person name="Godsy E."/>
            <person name="Goodner B."/>
            <person name="Hellner-Burris K."/>
            <person name="Hernandez J.A."/>
            <person name="Houmiel K."/>
            <person name="Imperial J."/>
            <person name="Kennedy C."/>
            <person name="Larson T.J."/>
            <person name="Latreille P."/>
            <person name="Ligon L.S."/>
            <person name="Lu J."/>
            <person name="Maerk M."/>
            <person name="Miller N.M."/>
            <person name="Norton S."/>
            <person name="O'Carroll I.P."/>
            <person name="Paulsen I."/>
            <person name="Raulfs E.C."/>
            <person name="Roemer R."/>
            <person name="Rosser J."/>
            <person name="Segura D."/>
            <person name="Slater S."/>
            <person name="Stricklin S.L."/>
            <person name="Studholme D.J."/>
            <person name="Sun J."/>
            <person name="Viana C.J."/>
            <person name="Wallin E."/>
            <person name="Wang B."/>
            <person name="Wheeler C."/>
            <person name="Zhu H."/>
            <person name="Dean D.R."/>
            <person name="Dixon R."/>
            <person name="Wood D."/>
        </authorList>
    </citation>
    <scope>NUCLEOTIDE SEQUENCE [LARGE SCALE GENOMIC DNA]</scope>
    <source>
        <strain>DJ / ATCC BAA-1303</strain>
    </source>
</reference>
<accession>C1DLP4</accession>
<gene>
    <name evidence="1" type="primary">rsgA</name>
    <name type="ordered locus">Avin_07460</name>
</gene>
<keyword id="KW-0963">Cytoplasm</keyword>
<keyword id="KW-0342">GTP-binding</keyword>
<keyword id="KW-0378">Hydrolase</keyword>
<keyword id="KW-0479">Metal-binding</keyword>
<keyword id="KW-0547">Nucleotide-binding</keyword>
<keyword id="KW-0690">Ribosome biogenesis</keyword>
<keyword id="KW-0694">RNA-binding</keyword>
<keyword id="KW-0699">rRNA-binding</keyword>
<keyword id="KW-0862">Zinc</keyword>
<evidence type="ECO:0000255" key="1">
    <source>
        <dbReference type="HAMAP-Rule" id="MF_01820"/>
    </source>
</evidence>
<evidence type="ECO:0000255" key="2">
    <source>
        <dbReference type="PROSITE-ProRule" id="PRU01058"/>
    </source>
</evidence>